<organism>
    <name type="scientific">Yersinia pseudotuberculosis serotype I (strain IP32953)</name>
    <dbReference type="NCBI Taxonomy" id="273123"/>
    <lineage>
        <taxon>Bacteria</taxon>
        <taxon>Pseudomonadati</taxon>
        <taxon>Pseudomonadota</taxon>
        <taxon>Gammaproteobacteria</taxon>
        <taxon>Enterobacterales</taxon>
        <taxon>Yersiniaceae</taxon>
        <taxon>Yersinia</taxon>
    </lineage>
</organism>
<accession>Q664S7</accession>
<feature type="chain" id="PRO_0000130242" description="Small ribosomal subunit protein uS3">
    <location>
        <begin position="1"/>
        <end position="232"/>
    </location>
</feature>
<feature type="domain" description="KH type-2" evidence="1">
    <location>
        <begin position="39"/>
        <end position="107"/>
    </location>
</feature>
<dbReference type="EMBL" id="BX936398">
    <property type="protein sequence ID" value="CAH22930.1"/>
    <property type="molecule type" value="Genomic_DNA"/>
</dbReference>
<dbReference type="RefSeq" id="WP_002221644.1">
    <property type="nucleotide sequence ID" value="NZ_CP009712.1"/>
</dbReference>
<dbReference type="SMR" id="Q664S7"/>
<dbReference type="GeneID" id="97454237"/>
<dbReference type="KEGG" id="ypo:BZ17_2895"/>
<dbReference type="KEGG" id="yps:YPTB3692"/>
<dbReference type="PATRIC" id="fig|273123.14.peg.3036"/>
<dbReference type="Proteomes" id="UP000001011">
    <property type="component" value="Chromosome"/>
</dbReference>
<dbReference type="GO" id="GO:0022627">
    <property type="term" value="C:cytosolic small ribosomal subunit"/>
    <property type="evidence" value="ECO:0007669"/>
    <property type="project" value="TreeGrafter"/>
</dbReference>
<dbReference type="GO" id="GO:0003729">
    <property type="term" value="F:mRNA binding"/>
    <property type="evidence" value="ECO:0007669"/>
    <property type="project" value="UniProtKB-UniRule"/>
</dbReference>
<dbReference type="GO" id="GO:0019843">
    <property type="term" value="F:rRNA binding"/>
    <property type="evidence" value="ECO:0007669"/>
    <property type="project" value="UniProtKB-UniRule"/>
</dbReference>
<dbReference type="GO" id="GO:0003735">
    <property type="term" value="F:structural constituent of ribosome"/>
    <property type="evidence" value="ECO:0007669"/>
    <property type="project" value="InterPro"/>
</dbReference>
<dbReference type="GO" id="GO:0006412">
    <property type="term" value="P:translation"/>
    <property type="evidence" value="ECO:0007669"/>
    <property type="project" value="UniProtKB-UniRule"/>
</dbReference>
<dbReference type="CDD" id="cd02412">
    <property type="entry name" value="KH-II_30S_S3"/>
    <property type="match status" value="1"/>
</dbReference>
<dbReference type="FunFam" id="3.30.1140.32:FF:000001">
    <property type="entry name" value="30S ribosomal protein S3"/>
    <property type="match status" value="1"/>
</dbReference>
<dbReference type="FunFam" id="3.30.300.20:FF:000001">
    <property type="entry name" value="30S ribosomal protein S3"/>
    <property type="match status" value="1"/>
</dbReference>
<dbReference type="Gene3D" id="3.30.300.20">
    <property type="match status" value="1"/>
</dbReference>
<dbReference type="Gene3D" id="3.30.1140.32">
    <property type="entry name" value="Ribosomal protein S3, C-terminal domain"/>
    <property type="match status" value="1"/>
</dbReference>
<dbReference type="HAMAP" id="MF_01309_B">
    <property type="entry name" value="Ribosomal_uS3_B"/>
    <property type="match status" value="1"/>
</dbReference>
<dbReference type="InterPro" id="IPR004087">
    <property type="entry name" value="KH_dom"/>
</dbReference>
<dbReference type="InterPro" id="IPR015946">
    <property type="entry name" value="KH_dom-like_a/b"/>
</dbReference>
<dbReference type="InterPro" id="IPR004044">
    <property type="entry name" value="KH_dom_type_2"/>
</dbReference>
<dbReference type="InterPro" id="IPR009019">
    <property type="entry name" value="KH_sf_prok-type"/>
</dbReference>
<dbReference type="InterPro" id="IPR036419">
    <property type="entry name" value="Ribosomal_S3_C_sf"/>
</dbReference>
<dbReference type="InterPro" id="IPR005704">
    <property type="entry name" value="Ribosomal_uS3_bac-typ"/>
</dbReference>
<dbReference type="InterPro" id="IPR001351">
    <property type="entry name" value="Ribosomal_uS3_C"/>
</dbReference>
<dbReference type="InterPro" id="IPR018280">
    <property type="entry name" value="Ribosomal_uS3_CS"/>
</dbReference>
<dbReference type="NCBIfam" id="TIGR01009">
    <property type="entry name" value="rpsC_bact"/>
    <property type="match status" value="1"/>
</dbReference>
<dbReference type="PANTHER" id="PTHR11760">
    <property type="entry name" value="30S/40S RIBOSOMAL PROTEIN S3"/>
    <property type="match status" value="1"/>
</dbReference>
<dbReference type="PANTHER" id="PTHR11760:SF19">
    <property type="entry name" value="SMALL RIBOSOMAL SUBUNIT PROTEIN US3C"/>
    <property type="match status" value="1"/>
</dbReference>
<dbReference type="Pfam" id="PF07650">
    <property type="entry name" value="KH_2"/>
    <property type="match status" value="1"/>
</dbReference>
<dbReference type="Pfam" id="PF00189">
    <property type="entry name" value="Ribosomal_S3_C"/>
    <property type="match status" value="1"/>
</dbReference>
<dbReference type="SMART" id="SM00322">
    <property type="entry name" value="KH"/>
    <property type="match status" value="1"/>
</dbReference>
<dbReference type="SUPFAM" id="SSF54814">
    <property type="entry name" value="Prokaryotic type KH domain (KH-domain type II)"/>
    <property type="match status" value="1"/>
</dbReference>
<dbReference type="SUPFAM" id="SSF54821">
    <property type="entry name" value="Ribosomal protein S3 C-terminal domain"/>
    <property type="match status" value="1"/>
</dbReference>
<dbReference type="PROSITE" id="PS50823">
    <property type="entry name" value="KH_TYPE_2"/>
    <property type="match status" value="1"/>
</dbReference>
<dbReference type="PROSITE" id="PS00548">
    <property type="entry name" value="RIBOSOMAL_S3"/>
    <property type="match status" value="1"/>
</dbReference>
<proteinExistence type="inferred from homology"/>
<keyword id="KW-0687">Ribonucleoprotein</keyword>
<keyword id="KW-0689">Ribosomal protein</keyword>
<keyword id="KW-0694">RNA-binding</keyword>
<keyword id="KW-0699">rRNA-binding</keyword>
<sequence length="232" mass="25829">MGQKVHPNGIRLGIVKAWNSTWYANTKEFADNLDSDFKVRQFLTKELAKASVSRIVIERPAKSIRVTIHTARPGIVIGKKGEDVEKLRKVVADIAGVPAQINIAEVRKPELDAKLVADSITSQLERRVMFRRAMKRAVQNAMRLGAKGIKVEVSGRLGGAEIARTEWYREGRVPLHTLRADIDYNTSEAHTTYGVIGVKVWIFKGEILGGMAAVEQPEPAAQPKKQQRKGRK</sequence>
<protein>
    <recommendedName>
        <fullName evidence="1">Small ribosomal subunit protein uS3</fullName>
    </recommendedName>
    <alternativeName>
        <fullName evidence="2">30S ribosomal protein S3</fullName>
    </alternativeName>
</protein>
<evidence type="ECO:0000255" key="1">
    <source>
        <dbReference type="HAMAP-Rule" id="MF_01309"/>
    </source>
</evidence>
<evidence type="ECO:0000305" key="2"/>
<name>RS3_YERPS</name>
<comment type="function">
    <text evidence="1">Binds the lower part of the 30S subunit head. Binds mRNA in the 70S ribosome, positioning it for translation.</text>
</comment>
<comment type="subunit">
    <text evidence="1">Part of the 30S ribosomal subunit. Forms a tight complex with proteins S10 and S14.</text>
</comment>
<comment type="similarity">
    <text evidence="1">Belongs to the universal ribosomal protein uS3 family.</text>
</comment>
<reference key="1">
    <citation type="journal article" date="2004" name="Proc. Natl. Acad. Sci. U.S.A.">
        <title>Insights into the evolution of Yersinia pestis through whole-genome comparison with Yersinia pseudotuberculosis.</title>
        <authorList>
            <person name="Chain P.S.G."/>
            <person name="Carniel E."/>
            <person name="Larimer F.W."/>
            <person name="Lamerdin J."/>
            <person name="Stoutland P.O."/>
            <person name="Regala W.M."/>
            <person name="Georgescu A.M."/>
            <person name="Vergez L.M."/>
            <person name="Land M.L."/>
            <person name="Motin V.L."/>
            <person name="Brubaker R.R."/>
            <person name="Fowler J."/>
            <person name="Hinnebusch J."/>
            <person name="Marceau M."/>
            <person name="Medigue C."/>
            <person name="Simonet M."/>
            <person name="Chenal-Francisque V."/>
            <person name="Souza B."/>
            <person name="Dacheux D."/>
            <person name="Elliott J.M."/>
            <person name="Derbise A."/>
            <person name="Hauser L.J."/>
            <person name="Garcia E."/>
        </authorList>
    </citation>
    <scope>NUCLEOTIDE SEQUENCE [LARGE SCALE GENOMIC DNA]</scope>
    <source>
        <strain>IP32953</strain>
    </source>
</reference>
<gene>
    <name evidence="1" type="primary">rpsC</name>
    <name type="ordered locus">YPTB3692</name>
</gene>